<feature type="chain" id="PRO_0000179423" description="Trigger factor">
    <location>
        <begin position="1"/>
        <end position="432"/>
    </location>
</feature>
<feature type="domain" description="PPIase FKBP-type">
    <location>
        <begin position="161"/>
        <end position="246"/>
    </location>
</feature>
<sequence>MQVSVETTQGLGRRVTITIAADSIETAVKSELVNVAKKVRIDGFRKGKVPMNIVAQRYGASVRQDVLGDLMSRNFIDAIIKEKINPAGAPTYVPGEYKLGEDFTYSVEFEVYPEVELQGLEAIEVEKPIVEVTDADVDGMLDTLRKQQATWKEKDGAVEAEDRVTIDFTGSVDGEEFEGGKASDFVLAMGQGRMIPGFEDGIKGHKAGEEFTIDVTFPEEYHAENLKGKAAKFAINLKKVEERELPELTAEFIKRFGVEDGSVEGLRAEVRKNMERELKSAIRNRVKSQAIEGLVKANDIDVPAALIDSEIDVLRRQAAQRFGGNEKQALELPRELFEEQAKRRVVVGLLLGEVIRTNELKADEERVKGLIEEMASAYEDPKEVIEFYSKNKELMDNMRNVALEEQAVEAVLAKAKVTEKETTFNELMNQQA</sequence>
<evidence type="ECO:0000250" key="1"/>
<evidence type="ECO:0000305" key="2"/>
<proteinExistence type="inferred from homology"/>
<name>TIG_SHIFL</name>
<organism>
    <name type="scientific">Shigella flexneri</name>
    <dbReference type="NCBI Taxonomy" id="623"/>
    <lineage>
        <taxon>Bacteria</taxon>
        <taxon>Pseudomonadati</taxon>
        <taxon>Pseudomonadota</taxon>
        <taxon>Gammaproteobacteria</taxon>
        <taxon>Enterobacterales</taxon>
        <taxon>Enterobacteriaceae</taxon>
        <taxon>Shigella</taxon>
    </lineage>
</organism>
<comment type="function">
    <text evidence="1">Involved in protein export. Acts as a chaperone by maintaining the newly synthesized protein in an open conformation. Functions as a peptidyl-prolyl cis-trans isomerase (By similarity).</text>
</comment>
<comment type="catalytic activity">
    <reaction>
        <text>[protein]-peptidylproline (omega=180) = [protein]-peptidylproline (omega=0)</text>
        <dbReference type="Rhea" id="RHEA:16237"/>
        <dbReference type="Rhea" id="RHEA-COMP:10747"/>
        <dbReference type="Rhea" id="RHEA-COMP:10748"/>
        <dbReference type="ChEBI" id="CHEBI:83833"/>
        <dbReference type="ChEBI" id="CHEBI:83834"/>
        <dbReference type="EC" id="5.2.1.8"/>
    </reaction>
</comment>
<comment type="subunit">
    <text evidence="1">Homodimer and monomer. In vivo most of the ribosomes are in complex with monomeric TF. Uncomplexed TF, however, is in a monomer-dimer equilibrium with approximately two thirds of TF existing in a dimeric state (By similarity).</text>
</comment>
<comment type="subcellular location">
    <subcellularLocation>
        <location>Cytoplasm</location>
    </subcellularLocation>
    <text evidence="1">About half TF is bound to the ribosome near the polypeptide exit tunnel while the other half is free in the cytoplasm.</text>
</comment>
<comment type="domain">
    <text evidence="1">Consists of 3 domains; the N-terminus binds the ribosome, the middle domain has PPIase activity, while the C-terminus has intrinsic chaperone activity on its own.</text>
</comment>
<comment type="similarity">
    <text evidence="2">Belongs to the FKBP-type PPIase family. Tig subfamily.</text>
</comment>
<reference key="1">
    <citation type="journal article" date="2002" name="Nucleic Acids Res.">
        <title>Genome sequence of Shigella flexneri 2a: insights into pathogenicity through comparison with genomes of Escherichia coli K12 and O157.</title>
        <authorList>
            <person name="Jin Q."/>
            <person name="Yuan Z."/>
            <person name="Xu J."/>
            <person name="Wang Y."/>
            <person name="Shen Y."/>
            <person name="Lu W."/>
            <person name="Wang J."/>
            <person name="Liu H."/>
            <person name="Yang J."/>
            <person name="Yang F."/>
            <person name="Zhang X."/>
            <person name="Zhang J."/>
            <person name="Yang G."/>
            <person name="Wu H."/>
            <person name="Qu D."/>
            <person name="Dong J."/>
            <person name="Sun L."/>
            <person name="Xue Y."/>
            <person name="Zhao A."/>
            <person name="Gao Y."/>
            <person name="Zhu J."/>
            <person name="Kan B."/>
            <person name="Ding K."/>
            <person name="Chen S."/>
            <person name="Cheng H."/>
            <person name="Yao Z."/>
            <person name="He B."/>
            <person name="Chen R."/>
            <person name="Ma D."/>
            <person name="Qiang B."/>
            <person name="Wen Y."/>
            <person name="Hou Y."/>
            <person name="Yu J."/>
        </authorList>
    </citation>
    <scope>NUCLEOTIDE SEQUENCE [LARGE SCALE GENOMIC DNA]</scope>
    <source>
        <strain>301 / Serotype 2a</strain>
    </source>
</reference>
<reference key="2">
    <citation type="journal article" date="2003" name="Infect. Immun.">
        <title>Complete genome sequence and comparative genomics of Shigella flexneri serotype 2a strain 2457T.</title>
        <authorList>
            <person name="Wei J."/>
            <person name="Goldberg M.B."/>
            <person name="Burland V."/>
            <person name="Venkatesan M.M."/>
            <person name="Deng W."/>
            <person name="Fournier G."/>
            <person name="Mayhew G.F."/>
            <person name="Plunkett G. III"/>
            <person name="Rose D.J."/>
            <person name="Darling A."/>
            <person name="Mau B."/>
            <person name="Perna N.T."/>
            <person name="Payne S.M."/>
            <person name="Runyen-Janecky L.J."/>
            <person name="Zhou S."/>
            <person name="Schwartz D.C."/>
            <person name="Blattner F.R."/>
        </authorList>
    </citation>
    <scope>NUCLEOTIDE SEQUENCE [LARGE SCALE GENOMIC DNA]</scope>
    <source>
        <strain>ATCC 700930 / 2457T / Serotype 2a</strain>
    </source>
</reference>
<dbReference type="EC" id="5.2.1.8"/>
<dbReference type="EMBL" id="AE005674">
    <property type="protein sequence ID" value="AAN42037.1"/>
    <property type="molecule type" value="Genomic_DNA"/>
</dbReference>
<dbReference type="EMBL" id="AE014073">
    <property type="protein sequence ID" value="AAP15915.1"/>
    <property type="molecule type" value="Genomic_DNA"/>
</dbReference>
<dbReference type="RefSeq" id="NP_706330.1">
    <property type="nucleotide sequence ID" value="NC_004337.2"/>
</dbReference>
<dbReference type="RefSeq" id="WP_001198386.1">
    <property type="nucleotide sequence ID" value="NZ_WPGW01000052.1"/>
</dbReference>
<dbReference type="SMR" id="P0A852"/>
<dbReference type="STRING" id="198214.SF0381"/>
<dbReference type="PaxDb" id="198214-SF0381"/>
<dbReference type="GeneID" id="1027715"/>
<dbReference type="GeneID" id="75202861"/>
<dbReference type="KEGG" id="sfl:SF0381"/>
<dbReference type="KEGG" id="sfx:S0387"/>
<dbReference type="PATRIC" id="fig|198214.7.peg.439"/>
<dbReference type="HOGENOM" id="CLU_033058_2_0_6"/>
<dbReference type="Proteomes" id="UP000001006">
    <property type="component" value="Chromosome"/>
</dbReference>
<dbReference type="Proteomes" id="UP000002673">
    <property type="component" value="Chromosome"/>
</dbReference>
<dbReference type="GO" id="GO:0005737">
    <property type="term" value="C:cytoplasm"/>
    <property type="evidence" value="ECO:0007669"/>
    <property type="project" value="UniProtKB-SubCell"/>
</dbReference>
<dbReference type="GO" id="GO:0003755">
    <property type="term" value="F:peptidyl-prolyl cis-trans isomerase activity"/>
    <property type="evidence" value="ECO:0007669"/>
    <property type="project" value="UniProtKB-UniRule"/>
</dbReference>
<dbReference type="GO" id="GO:0044183">
    <property type="term" value="F:protein folding chaperone"/>
    <property type="evidence" value="ECO:0007669"/>
    <property type="project" value="TreeGrafter"/>
</dbReference>
<dbReference type="GO" id="GO:0043022">
    <property type="term" value="F:ribosome binding"/>
    <property type="evidence" value="ECO:0007669"/>
    <property type="project" value="TreeGrafter"/>
</dbReference>
<dbReference type="GO" id="GO:0051083">
    <property type="term" value="P:'de novo' cotranslational protein folding"/>
    <property type="evidence" value="ECO:0007669"/>
    <property type="project" value="TreeGrafter"/>
</dbReference>
<dbReference type="GO" id="GO:0051301">
    <property type="term" value="P:cell division"/>
    <property type="evidence" value="ECO:0007669"/>
    <property type="project" value="UniProtKB-KW"/>
</dbReference>
<dbReference type="GO" id="GO:0061077">
    <property type="term" value="P:chaperone-mediated protein folding"/>
    <property type="evidence" value="ECO:0007669"/>
    <property type="project" value="TreeGrafter"/>
</dbReference>
<dbReference type="GO" id="GO:0015031">
    <property type="term" value="P:protein transport"/>
    <property type="evidence" value="ECO:0007669"/>
    <property type="project" value="UniProtKB-UniRule"/>
</dbReference>
<dbReference type="GO" id="GO:0043335">
    <property type="term" value="P:protein unfolding"/>
    <property type="evidence" value="ECO:0007669"/>
    <property type="project" value="TreeGrafter"/>
</dbReference>
<dbReference type="FunFam" id="1.10.3120.10:FF:000001">
    <property type="entry name" value="Trigger factor"/>
    <property type="match status" value="1"/>
</dbReference>
<dbReference type="FunFam" id="3.10.50.40:FF:000001">
    <property type="entry name" value="Trigger factor"/>
    <property type="match status" value="1"/>
</dbReference>
<dbReference type="FunFam" id="3.30.70.1050:FF:000001">
    <property type="entry name" value="Trigger factor"/>
    <property type="match status" value="1"/>
</dbReference>
<dbReference type="Gene3D" id="3.10.50.40">
    <property type="match status" value="1"/>
</dbReference>
<dbReference type="Gene3D" id="3.30.70.1050">
    <property type="entry name" value="Trigger factor ribosome-binding domain"/>
    <property type="match status" value="1"/>
</dbReference>
<dbReference type="Gene3D" id="1.10.3120.10">
    <property type="entry name" value="Trigger factor, C-terminal domain"/>
    <property type="match status" value="1"/>
</dbReference>
<dbReference type="HAMAP" id="MF_00303">
    <property type="entry name" value="Trigger_factor_Tig"/>
    <property type="match status" value="1"/>
</dbReference>
<dbReference type="InterPro" id="IPR046357">
    <property type="entry name" value="PPIase_dom_sf"/>
</dbReference>
<dbReference type="InterPro" id="IPR001179">
    <property type="entry name" value="PPIase_FKBP_dom"/>
</dbReference>
<dbReference type="InterPro" id="IPR005215">
    <property type="entry name" value="Trig_fac"/>
</dbReference>
<dbReference type="InterPro" id="IPR008880">
    <property type="entry name" value="Trigger_fac_C"/>
</dbReference>
<dbReference type="InterPro" id="IPR037041">
    <property type="entry name" value="Trigger_fac_C_sf"/>
</dbReference>
<dbReference type="InterPro" id="IPR008881">
    <property type="entry name" value="Trigger_fac_ribosome-bd_bac"/>
</dbReference>
<dbReference type="InterPro" id="IPR036611">
    <property type="entry name" value="Trigger_fac_ribosome-bd_sf"/>
</dbReference>
<dbReference type="InterPro" id="IPR027304">
    <property type="entry name" value="Trigger_fact/SurA_dom_sf"/>
</dbReference>
<dbReference type="NCBIfam" id="TIGR00115">
    <property type="entry name" value="tig"/>
    <property type="match status" value="1"/>
</dbReference>
<dbReference type="PANTHER" id="PTHR30560">
    <property type="entry name" value="TRIGGER FACTOR CHAPERONE AND PEPTIDYL-PROLYL CIS/TRANS ISOMERASE"/>
    <property type="match status" value="1"/>
</dbReference>
<dbReference type="PANTHER" id="PTHR30560:SF3">
    <property type="entry name" value="TRIGGER FACTOR-LIKE PROTEIN TIG, CHLOROPLASTIC"/>
    <property type="match status" value="1"/>
</dbReference>
<dbReference type="Pfam" id="PF00254">
    <property type="entry name" value="FKBP_C"/>
    <property type="match status" value="1"/>
</dbReference>
<dbReference type="Pfam" id="PF05698">
    <property type="entry name" value="Trigger_C"/>
    <property type="match status" value="1"/>
</dbReference>
<dbReference type="Pfam" id="PF05697">
    <property type="entry name" value="Trigger_N"/>
    <property type="match status" value="1"/>
</dbReference>
<dbReference type="PIRSF" id="PIRSF003095">
    <property type="entry name" value="Trigger_factor"/>
    <property type="match status" value="1"/>
</dbReference>
<dbReference type="SUPFAM" id="SSF54534">
    <property type="entry name" value="FKBP-like"/>
    <property type="match status" value="1"/>
</dbReference>
<dbReference type="SUPFAM" id="SSF109998">
    <property type="entry name" value="Triger factor/SurA peptide-binding domain-like"/>
    <property type="match status" value="1"/>
</dbReference>
<dbReference type="SUPFAM" id="SSF102735">
    <property type="entry name" value="Trigger factor ribosome-binding domain"/>
    <property type="match status" value="1"/>
</dbReference>
<dbReference type="PROSITE" id="PS50059">
    <property type="entry name" value="FKBP_PPIASE"/>
    <property type="match status" value="1"/>
</dbReference>
<gene>
    <name type="primary">tig</name>
    <name type="ordered locus">SF0381</name>
    <name type="ordered locus">S0387</name>
</gene>
<accession>P0A852</accession>
<accession>P15299</accession>
<accession>P22257</accession>
<accession>P77603</accession>
<protein>
    <recommendedName>
        <fullName>Trigger factor</fullName>
        <shortName>TF</shortName>
        <ecNumber>5.2.1.8</ecNumber>
    </recommendedName>
    <alternativeName>
        <fullName>PPIase</fullName>
    </alternativeName>
</protein>
<keyword id="KW-0131">Cell cycle</keyword>
<keyword id="KW-0132">Cell division</keyword>
<keyword id="KW-0143">Chaperone</keyword>
<keyword id="KW-0963">Cytoplasm</keyword>
<keyword id="KW-0413">Isomerase</keyword>
<keyword id="KW-1185">Reference proteome</keyword>
<keyword id="KW-0697">Rotamase</keyword>